<organism>
    <name type="scientific">Methanococcus maripaludis (strain DSM 14266 / JCM 13030 / NBRC 101832 / S2 / LL)</name>
    <dbReference type="NCBI Taxonomy" id="267377"/>
    <lineage>
        <taxon>Archaea</taxon>
        <taxon>Methanobacteriati</taxon>
        <taxon>Methanobacteriota</taxon>
        <taxon>Methanomada group</taxon>
        <taxon>Methanococci</taxon>
        <taxon>Methanococcales</taxon>
        <taxon>Methanococcaceae</taxon>
        <taxon>Methanococcus</taxon>
    </lineage>
</organism>
<protein>
    <recommendedName>
        <fullName evidence="1">Large ribosomal subunit protein eL18</fullName>
    </recommendedName>
    <alternativeName>
        <fullName evidence="2">50S ribosomal protein L18e</fullName>
    </alternativeName>
</protein>
<comment type="similarity">
    <text evidence="1">Belongs to the eukaryotic ribosomal protein eL18 family.</text>
</comment>
<gene>
    <name evidence="1" type="primary">rpl18e</name>
    <name type="ordered locus">MMP1323</name>
</gene>
<name>RL18E_METMP</name>
<reference key="1">
    <citation type="journal article" date="2004" name="J. Bacteriol.">
        <title>Complete genome sequence of the genetically tractable hydrogenotrophic methanogen Methanococcus maripaludis.</title>
        <authorList>
            <person name="Hendrickson E.L."/>
            <person name="Kaul R."/>
            <person name="Zhou Y."/>
            <person name="Bovee D."/>
            <person name="Chapman P."/>
            <person name="Chung J."/>
            <person name="Conway de Macario E."/>
            <person name="Dodsworth J.A."/>
            <person name="Gillett W."/>
            <person name="Graham D.E."/>
            <person name="Hackett M."/>
            <person name="Haydock A.K."/>
            <person name="Kang A."/>
            <person name="Land M.L."/>
            <person name="Levy R."/>
            <person name="Lie T.J."/>
            <person name="Major T.A."/>
            <person name="Moore B.C."/>
            <person name="Porat I."/>
            <person name="Palmeiri A."/>
            <person name="Rouse G."/>
            <person name="Saenphimmachak C."/>
            <person name="Soell D."/>
            <person name="Van Dien S."/>
            <person name="Wang T."/>
            <person name="Whitman W.B."/>
            <person name="Xia Q."/>
            <person name="Zhang Y."/>
            <person name="Larimer F.W."/>
            <person name="Olson M.V."/>
            <person name="Leigh J.A."/>
        </authorList>
    </citation>
    <scope>NUCLEOTIDE SEQUENCE [LARGE SCALE GENOMIC DNA]</scope>
    <source>
        <strain>DSM 14266 / JCM 13030 / NBRC 101832 / S2 / LL</strain>
    </source>
</reference>
<feature type="chain" id="PRO_0000132793" description="Large ribosomal subunit protein eL18">
    <location>
        <begin position="1"/>
        <end position="120"/>
    </location>
</feature>
<dbReference type="EMBL" id="BX950229">
    <property type="protein sequence ID" value="CAF30879.1"/>
    <property type="molecule type" value="Genomic_DNA"/>
</dbReference>
<dbReference type="RefSeq" id="WP_011171267.1">
    <property type="nucleotide sequence ID" value="NC_005791.1"/>
</dbReference>
<dbReference type="SMR" id="Q6LXM7"/>
<dbReference type="STRING" id="267377.MMP1323"/>
<dbReference type="EnsemblBacteria" id="CAF30879">
    <property type="protein sequence ID" value="CAF30879"/>
    <property type="gene ID" value="MMP1323"/>
</dbReference>
<dbReference type="KEGG" id="mmp:MMP1323"/>
<dbReference type="PATRIC" id="fig|267377.15.peg.1358"/>
<dbReference type="eggNOG" id="arCOG00780">
    <property type="taxonomic scope" value="Archaea"/>
</dbReference>
<dbReference type="HOGENOM" id="CLU_146465_0_0_2"/>
<dbReference type="OrthoDB" id="11309at2157"/>
<dbReference type="Proteomes" id="UP000000590">
    <property type="component" value="Chromosome"/>
</dbReference>
<dbReference type="GO" id="GO:0022625">
    <property type="term" value="C:cytosolic large ribosomal subunit"/>
    <property type="evidence" value="ECO:0007669"/>
    <property type="project" value="TreeGrafter"/>
</dbReference>
<dbReference type="GO" id="GO:0003723">
    <property type="term" value="F:RNA binding"/>
    <property type="evidence" value="ECO:0007669"/>
    <property type="project" value="TreeGrafter"/>
</dbReference>
<dbReference type="GO" id="GO:0003735">
    <property type="term" value="F:structural constituent of ribosome"/>
    <property type="evidence" value="ECO:0007669"/>
    <property type="project" value="InterPro"/>
</dbReference>
<dbReference type="GO" id="GO:0006412">
    <property type="term" value="P:translation"/>
    <property type="evidence" value="ECO:0007669"/>
    <property type="project" value="UniProtKB-UniRule"/>
</dbReference>
<dbReference type="Gene3D" id="3.100.10.10">
    <property type="match status" value="1"/>
</dbReference>
<dbReference type="HAMAP" id="MF_00329">
    <property type="entry name" value="Ribosomal_eL18"/>
    <property type="match status" value="1"/>
</dbReference>
<dbReference type="InterPro" id="IPR000039">
    <property type="entry name" value="Ribosomal_eL18"/>
</dbReference>
<dbReference type="InterPro" id="IPR022947">
    <property type="entry name" value="Ribosomal_eL18_arc"/>
</dbReference>
<dbReference type="InterPro" id="IPR021131">
    <property type="entry name" value="Ribosomal_uL15/eL18"/>
</dbReference>
<dbReference type="InterPro" id="IPR036227">
    <property type="entry name" value="Ribosomal_uL15/eL18_sf"/>
</dbReference>
<dbReference type="InterPro" id="IPR001196">
    <property type="entry name" value="Ribosomal_uL15_CS"/>
</dbReference>
<dbReference type="NCBIfam" id="NF003079">
    <property type="entry name" value="PRK04005.1"/>
    <property type="match status" value="1"/>
</dbReference>
<dbReference type="PANTHER" id="PTHR10934">
    <property type="entry name" value="60S RIBOSOMAL PROTEIN L18"/>
    <property type="match status" value="1"/>
</dbReference>
<dbReference type="PANTHER" id="PTHR10934:SF2">
    <property type="entry name" value="LARGE RIBOSOMAL SUBUNIT PROTEIN EL18"/>
    <property type="match status" value="1"/>
</dbReference>
<dbReference type="Pfam" id="PF17135">
    <property type="entry name" value="Ribosomal_L18"/>
    <property type="match status" value="1"/>
</dbReference>
<dbReference type="SUPFAM" id="SSF52080">
    <property type="entry name" value="Ribosomal proteins L15p and L18e"/>
    <property type="match status" value="1"/>
</dbReference>
<proteinExistence type="inferred from homology"/>
<sequence>MKKIMSTNPKTPELIQKLKEESFKNSAPIWKDVAKKLAKPARKKVEVNVSKISRYASEGDVLLIPGKVLGAGSLKVNVTVAAFSFSETAKSAIEAVGGKCLTIEELIAENPKGSKVTIMA</sequence>
<accession>Q6LXM7</accession>
<evidence type="ECO:0000255" key="1">
    <source>
        <dbReference type="HAMAP-Rule" id="MF_00329"/>
    </source>
</evidence>
<evidence type="ECO:0000305" key="2"/>
<keyword id="KW-1185">Reference proteome</keyword>
<keyword id="KW-0687">Ribonucleoprotein</keyword>
<keyword id="KW-0689">Ribosomal protein</keyword>